<accession>Q2LY80</accession>
<evidence type="ECO:0000255" key="1">
    <source>
        <dbReference type="HAMAP-Rule" id="MF_00057"/>
    </source>
</evidence>
<sequence length="248" mass="28526">MEKIVCIIPSRYSSSRFQGKPLADLCGKPMIQHVYERVLKSELVSYAAVATDDSRIFEAVRKFGGKAIMTAARHRSGTDRIAEAVNSLDLKDDDIVVNVQGDQPIFEPEQIAEVTRPLREDPSLPMATLIYRIVREEEITHPNAVKVVFDRNFNALYFSRATIPYVRDDRHPIAYYKHHGIYAYRRAFLRTFTALEEGTMERLESLEQLRALEFGYRIRVVETLHDSVEVDTPEELARVRDILLGRAR</sequence>
<proteinExistence type="inferred from homology"/>
<comment type="function">
    <text evidence="1">Activates KDO (a required 8-carbon sugar) for incorporation into bacterial lipopolysaccharide in Gram-negative bacteria.</text>
</comment>
<comment type="catalytic activity">
    <reaction evidence="1">
        <text>3-deoxy-alpha-D-manno-oct-2-ulosonate + CTP = CMP-3-deoxy-beta-D-manno-octulosonate + diphosphate</text>
        <dbReference type="Rhea" id="RHEA:23448"/>
        <dbReference type="ChEBI" id="CHEBI:33019"/>
        <dbReference type="ChEBI" id="CHEBI:37563"/>
        <dbReference type="ChEBI" id="CHEBI:85986"/>
        <dbReference type="ChEBI" id="CHEBI:85987"/>
        <dbReference type="EC" id="2.7.7.38"/>
    </reaction>
</comment>
<comment type="pathway">
    <text evidence="1">Nucleotide-sugar biosynthesis; CMP-3-deoxy-D-manno-octulosonate biosynthesis; CMP-3-deoxy-D-manno-octulosonate from 3-deoxy-D-manno-octulosonate and CTP: step 1/1.</text>
</comment>
<comment type="pathway">
    <text evidence="1">Bacterial outer membrane biogenesis; lipopolysaccharide biosynthesis.</text>
</comment>
<comment type="subcellular location">
    <subcellularLocation>
        <location evidence="1">Cytoplasm</location>
    </subcellularLocation>
</comment>
<comment type="similarity">
    <text evidence="1">Belongs to the KdsB family.</text>
</comment>
<organism>
    <name type="scientific">Syntrophus aciditrophicus (strain SB)</name>
    <dbReference type="NCBI Taxonomy" id="56780"/>
    <lineage>
        <taxon>Bacteria</taxon>
        <taxon>Pseudomonadati</taxon>
        <taxon>Thermodesulfobacteriota</taxon>
        <taxon>Syntrophia</taxon>
        <taxon>Syntrophales</taxon>
        <taxon>Syntrophaceae</taxon>
        <taxon>Syntrophus</taxon>
    </lineage>
</organism>
<protein>
    <recommendedName>
        <fullName evidence="1">3-deoxy-manno-octulosonate cytidylyltransferase</fullName>
        <ecNumber evidence="1">2.7.7.38</ecNumber>
    </recommendedName>
    <alternativeName>
        <fullName evidence="1">CMP-2-keto-3-deoxyoctulosonic acid synthase</fullName>
        <shortName evidence="1">CKS</shortName>
        <shortName evidence="1">CMP-KDO synthase</shortName>
    </alternativeName>
</protein>
<reference key="1">
    <citation type="journal article" date="2007" name="Proc. Natl. Acad. Sci. U.S.A.">
        <title>The genome of Syntrophus aciditrophicus: life at the thermodynamic limit of microbial growth.</title>
        <authorList>
            <person name="McInerney M.J."/>
            <person name="Rohlin L."/>
            <person name="Mouttaki H."/>
            <person name="Kim U."/>
            <person name="Krupp R.S."/>
            <person name="Rios-Hernandez L."/>
            <person name="Sieber J."/>
            <person name="Struchtemeyer C.G."/>
            <person name="Bhattacharyya A."/>
            <person name="Campbell J.W."/>
            <person name="Gunsalus R.P."/>
        </authorList>
    </citation>
    <scope>NUCLEOTIDE SEQUENCE [LARGE SCALE GENOMIC DNA]</scope>
    <source>
        <strain>SB</strain>
    </source>
</reference>
<gene>
    <name evidence="1" type="primary">kdsB</name>
    <name type="ordered locus">SYNAS_31640</name>
    <name type="ORF">SYN_02057</name>
</gene>
<keyword id="KW-0963">Cytoplasm</keyword>
<keyword id="KW-0448">Lipopolysaccharide biosynthesis</keyword>
<keyword id="KW-0548">Nucleotidyltransferase</keyword>
<keyword id="KW-1185">Reference proteome</keyword>
<keyword id="KW-0808">Transferase</keyword>
<dbReference type="EC" id="2.7.7.38" evidence="1"/>
<dbReference type="EMBL" id="CP000252">
    <property type="protein sequence ID" value="ABC79043.1"/>
    <property type="molecule type" value="Genomic_DNA"/>
</dbReference>
<dbReference type="RefSeq" id="WP_011419057.1">
    <property type="nucleotide sequence ID" value="NC_007759.1"/>
</dbReference>
<dbReference type="SMR" id="Q2LY80"/>
<dbReference type="FunCoup" id="Q2LY80">
    <property type="interactions" value="387"/>
</dbReference>
<dbReference type="STRING" id="56780.SYN_02057"/>
<dbReference type="KEGG" id="sat:SYN_02057"/>
<dbReference type="eggNOG" id="COG1212">
    <property type="taxonomic scope" value="Bacteria"/>
</dbReference>
<dbReference type="HOGENOM" id="CLU_065038_0_1_7"/>
<dbReference type="InParanoid" id="Q2LY80"/>
<dbReference type="OrthoDB" id="9815559at2"/>
<dbReference type="UniPathway" id="UPA00030"/>
<dbReference type="UniPathway" id="UPA00358">
    <property type="reaction ID" value="UER00476"/>
</dbReference>
<dbReference type="Proteomes" id="UP000001933">
    <property type="component" value="Chromosome"/>
</dbReference>
<dbReference type="GO" id="GO:0005829">
    <property type="term" value="C:cytosol"/>
    <property type="evidence" value="ECO:0007669"/>
    <property type="project" value="TreeGrafter"/>
</dbReference>
<dbReference type="GO" id="GO:0008690">
    <property type="term" value="F:3-deoxy-manno-octulosonate cytidylyltransferase activity"/>
    <property type="evidence" value="ECO:0007669"/>
    <property type="project" value="UniProtKB-UniRule"/>
</dbReference>
<dbReference type="GO" id="GO:0033468">
    <property type="term" value="P:CMP-keto-3-deoxy-D-manno-octulosonic acid biosynthetic process"/>
    <property type="evidence" value="ECO:0007669"/>
    <property type="project" value="UniProtKB-UniRule"/>
</dbReference>
<dbReference type="GO" id="GO:0009103">
    <property type="term" value="P:lipopolysaccharide biosynthetic process"/>
    <property type="evidence" value="ECO:0007669"/>
    <property type="project" value="UniProtKB-UniRule"/>
</dbReference>
<dbReference type="CDD" id="cd02517">
    <property type="entry name" value="CMP-KDO-Synthetase"/>
    <property type="match status" value="1"/>
</dbReference>
<dbReference type="FunFam" id="3.90.550.10:FF:000011">
    <property type="entry name" value="3-deoxy-manno-octulosonate cytidylyltransferase"/>
    <property type="match status" value="1"/>
</dbReference>
<dbReference type="Gene3D" id="3.90.550.10">
    <property type="entry name" value="Spore Coat Polysaccharide Biosynthesis Protein SpsA, Chain A"/>
    <property type="match status" value="1"/>
</dbReference>
<dbReference type="HAMAP" id="MF_00057">
    <property type="entry name" value="KdsB"/>
    <property type="match status" value="1"/>
</dbReference>
<dbReference type="InterPro" id="IPR003329">
    <property type="entry name" value="Cytidylyl_trans"/>
</dbReference>
<dbReference type="InterPro" id="IPR004528">
    <property type="entry name" value="KdsB"/>
</dbReference>
<dbReference type="InterPro" id="IPR029044">
    <property type="entry name" value="Nucleotide-diphossugar_trans"/>
</dbReference>
<dbReference type="NCBIfam" id="TIGR00466">
    <property type="entry name" value="kdsB"/>
    <property type="match status" value="1"/>
</dbReference>
<dbReference type="NCBIfam" id="NF003950">
    <property type="entry name" value="PRK05450.1-3"/>
    <property type="match status" value="1"/>
</dbReference>
<dbReference type="NCBIfam" id="NF003952">
    <property type="entry name" value="PRK05450.1-5"/>
    <property type="match status" value="1"/>
</dbReference>
<dbReference type="NCBIfam" id="NF009905">
    <property type="entry name" value="PRK13368.1"/>
    <property type="match status" value="1"/>
</dbReference>
<dbReference type="PANTHER" id="PTHR42866">
    <property type="entry name" value="3-DEOXY-MANNO-OCTULOSONATE CYTIDYLYLTRANSFERASE"/>
    <property type="match status" value="1"/>
</dbReference>
<dbReference type="PANTHER" id="PTHR42866:SF2">
    <property type="entry name" value="3-DEOXY-MANNO-OCTULOSONATE CYTIDYLYLTRANSFERASE, MITOCHONDRIAL"/>
    <property type="match status" value="1"/>
</dbReference>
<dbReference type="Pfam" id="PF02348">
    <property type="entry name" value="CTP_transf_3"/>
    <property type="match status" value="1"/>
</dbReference>
<dbReference type="SUPFAM" id="SSF53448">
    <property type="entry name" value="Nucleotide-diphospho-sugar transferases"/>
    <property type="match status" value="1"/>
</dbReference>
<feature type="chain" id="PRO_1000091908" description="3-deoxy-manno-octulosonate cytidylyltransferase">
    <location>
        <begin position="1"/>
        <end position="248"/>
    </location>
</feature>
<name>KDSB_SYNAS</name>